<keyword id="KW-0137">Centromere</keyword>
<keyword id="KW-0158">Chromosome</keyword>
<keyword id="KW-0963">Cytoplasm</keyword>
<keyword id="KW-0206">Cytoskeleton</keyword>
<keyword id="KW-0378">Hydrolase</keyword>
<keyword id="KW-0408">Iron</keyword>
<keyword id="KW-0464">Manganese</keyword>
<keyword id="KW-0469">Meiosis</keyword>
<keyword id="KW-0479">Metal-binding</keyword>
<keyword id="KW-0488">Methylation</keyword>
<keyword id="KW-0539">Nucleus</keyword>
<keyword id="KW-0597">Phosphoprotein</keyword>
<keyword id="KW-0904">Protein phosphatase</keyword>
<keyword id="KW-1185">Reference proteome</keyword>
<keyword id="KW-0832">Ubl conjugation</keyword>
<keyword id="KW-0862">Zinc</keyword>
<evidence type="ECO:0000250" key="1">
    <source>
        <dbReference type="UniProtKB" id="P36873"/>
    </source>
</evidence>
<evidence type="ECO:0000250" key="2">
    <source>
        <dbReference type="UniProtKB" id="P63330"/>
    </source>
</evidence>
<evidence type="ECO:0000250" key="3">
    <source>
        <dbReference type="UniProtKB" id="P67774"/>
    </source>
</evidence>
<evidence type="ECO:0000250" key="4">
    <source>
        <dbReference type="UniProtKB" id="P67775"/>
    </source>
</evidence>
<evidence type="ECO:0000305" key="5"/>
<feature type="chain" id="PRO_0000058843" description="Serine/threonine-protein phosphatase 2A catalytic subunit alpha isoform">
    <location>
        <begin position="1"/>
        <end position="309"/>
    </location>
</feature>
<feature type="active site" description="Proton donor" evidence="1">
    <location>
        <position position="118"/>
    </location>
</feature>
<feature type="binding site" evidence="4">
    <location>
        <position position="57"/>
    </location>
    <ligand>
        <name>Mn(2+)</name>
        <dbReference type="ChEBI" id="CHEBI:29035"/>
        <label>1</label>
    </ligand>
</feature>
<feature type="binding site" evidence="4">
    <location>
        <position position="57"/>
    </location>
    <ligand>
        <name>Zn(2+)</name>
        <dbReference type="ChEBI" id="CHEBI:29105"/>
    </ligand>
</feature>
<feature type="binding site" evidence="4">
    <location>
        <position position="59"/>
    </location>
    <ligand>
        <name>Mn(2+)</name>
        <dbReference type="ChEBI" id="CHEBI:29035"/>
        <label>1</label>
    </ligand>
</feature>
<feature type="binding site" evidence="4">
    <location>
        <position position="59"/>
    </location>
    <ligand>
        <name>Zn(2+)</name>
        <dbReference type="ChEBI" id="CHEBI:29105"/>
    </ligand>
</feature>
<feature type="binding site" evidence="4">
    <location>
        <position position="85"/>
    </location>
    <ligand>
        <name>Fe(3+)</name>
        <dbReference type="ChEBI" id="CHEBI:29034"/>
    </ligand>
</feature>
<feature type="binding site" evidence="4">
    <location>
        <position position="85"/>
    </location>
    <ligand>
        <name>Mn(2+)</name>
        <dbReference type="ChEBI" id="CHEBI:29035"/>
        <label>1</label>
    </ligand>
</feature>
<feature type="binding site" evidence="4">
    <location>
        <position position="85"/>
    </location>
    <ligand>
        <name>Mn(2+)</name>
        <dbReference type="ChEBI" id="CHEBI:29035"/>
        <label>2</label>
    </ligand>
</feature>
<feature type="binding site" evidence="4">
    <location>
        <position position="85"/>
    </location>
    <ligand>
        <name>Zn(2+)</name>
        <dbReference type="ChEBI" id="CHEBI:29105"/>
    </ligand>
</feature>
<feature type="binding site" evidence="4">
    <location>
        <position position="117"/>
    </location>
    <ligand>
        <name>Fe(3+)</name>
        <dbReference type="ChEBI" id="CHEBI:29034"/>
    </ligand>
</feature>
<feature type="binding site" evidence="4">
    <location>
        <position position="117"/>
    </location>
    <ligand>
        <name>Mn(2+)</name>
        <dbReference type="ChEBI" id="CHEBI:29035"/>
        <label>2</label>
    </ligand>
</feature>
<feature type="binding site" evidence="4">
    <location>
        <position position="167"/>
    </location>
    <ligand>
        <name>Fe(3+)</name>
        <dbReference type="ChEBI" id="CHEBI:29034"/>
    </ligand>
</feature>
<feature type="binding site" evidence="4">
    <location>
        <position position="167"/>
    </location>
    <ligand>
        <name>Mn(2+)</name>
        <dbReference type="ChEBI" id="CHEBI:29035"/>
        <label>2</label>
    </ligand>
</feature>
<feature type="binding site" evidence="4">
    <location>
        <position position="241"/>
    </location>
    <ligand>
        <name>Fe(3+)</name>
        <dbReference type="ChEBI" id="CHEBI:29034"/>
    </ligand>
</feature>
<feature type="binding site" evidence="4">
    <location>
        <position position="241"/>
    </location>
    <ligand>
        <name>Mn(2+)</name>
        <dbReference type="ChEBI" id="CHEBI:29035"/>
        <label>2</label>
    </ligand>
</feature>
<feature type="modified residue" description="Phosphotyrosine" evidence="3">
    <location>
        <position position="307"/>
    </location>
</feature>
<feature type="modified residue" description="Leucine methyl ester" evidence="3">
    <location>
        <position position="309"/>
    </location>
</feature>
<name>PP2AA_RAT</name>
<accession>P63331</accession>
<accession>O88591</accession>
<accession>P13353</accession>
<proteinExistence type="evidence at protein level"/>
<dbReference type="EC" id="3.1.3.16" evidence="4"/>
<dbReference type="EMBL" id="X16043">
    <property type="protein sequence ID" value="CAA34166.1"/>
    <property type="molecule type" value="mRNA"/>
</dbReference>
<dbReference type="EMBL" id="X14159">
    <property type="protein sequence ID" value="CAB42983.1"/>
    <property type="molecule type" value="mRNA"/>
</dbReference>
<dbReference type="EMBL" id="M33114">
    <property type="protein sequence ID" value="AAA41904.1"/>
    <property type="molecule type" value="mRNA"/>
</dbReference>
<dbReference type="EMBL" id="BC070914">
    <property type="protein sequence ID" value="AAH70914.1"/>
    <property type="molecule type" value="mRNA"/>
</dbReference>
<dbReference type="EMBL" id="BC072531">
    <property type="protein sequence ID" value="AAH72531.1"/>
    <property type="molecule type" value="mRNA"/>
</dbReference>
<dbReference type="PIR" id="S06592">
    <property type="entry name" value="PART2A"/>
</dbReference>
<dbReference type="RefSeq" id="NP_058735.1">
    <property type="nucleotide sequence ID" value="NM_017039.3"/>
</dbReference>
<dbReference type="RefSeq" id="XP_008772116.1">
    <property type="nucleotide sequence ID" value="XM_008773894.2"/>
</dbReference>
<dbReference type="SMR" id="P63331"/>
<dbReference type="BioGRID" id="246804">
    <property type="interactions" value="10"/>
</dbReference>
<dbReference type="CORUM" id="P63331"/>
<dbReference type="FunCoup" id="P63331">
    <property type="interactions" value="4525"/>
</dbReference>
<dbReference type="IntAct" id="P63331">
    <property type="interactions" value="9"/>
</dbReference>
<dbReference type="MINT" id="P63331"/>
<dbReference type="STRING" id="10116.ENSRNOP00000007621"/>
<dbReference type="iPTMnet" id="P63331"/>
<dbReference type="PhosphoSitePlus" id="P63331"/>
<dbReference type="SwissPalm" id="P63331"/>
<dbReference type="jPOST" id="P63331"/>
<dbReference type="PaxDb" id="10116-ENSRNOP00000007621"/>
<dbReference type="Ensembl" id="ENSRNOT00000007621.6">
    <property type="protein sequence ID" value="ENSRNOP00000007621.3"/>
    <property type="gene ID" value="ENSRNOG00000005389.6"/>
</dbReference>
<dbReference type="GeneID" id="24672"/>
<dbReference type="KEGG" id="rno:24672"/>
<dbReference type="UCSC" id="RGD:3380">
    <property type="organism name" value="rat"/>
</dbReference>
<dbReference type="AGR" id="RGD:3380"/>
<dbReference type="CTD" id="5515"/>
<dbReference type="RGD" id="3380">
    <property type="gene designation" value="Ppp2ca"/>
</dbReference>
<dbReference type="eggNOG" id="KOG0371">
    <property type="taxonomic scope" value="Eukaryota"/>
</dbReference>
<dbReference type="GeneTree" id="ENSGT00550000074618"/>
<dbReference type="HOGENOM" id="CLU_004962_0_5_1"/>
<dbReference type="InParanoid" id="P63331"/>
<dbReference type="OMA" id="CMKVRYP"/>
<dbReference type="OrthoDB" id="1930084at2759"/>
<dbReference type="PhylomeDB" id="P63331"/>
<dbReference type="TreeFam" id="TF105559"/>
<dbReference type="Reactome" id="R-RNO-113501">
    <property type="pathway name" value="Inhibition of replication initiation of damaged DNA by RB1/E2F1"/>
</dbReference>
<dbReference type="Reactome" id="R-RNO-1295596">
    <property type="pathway name" value="Spry regulation of FGF signaling"/>
</dbReference>
<dbReference type="Reactome" id="R-RNO-141444">
    <property type="pathway name" value="Amplification of signal from unattached kinetochores via a MAD2 inhibitory signal"/>
</dbReference>
<dbReference type="Reactome" id="R-RNO-180024">
    <property type="pathway name" value="DARPP-32 events"/>
</dbReference>
<dbReference type="Reactome" id="R-RNO-195253">
    <property type="pathway name" value="Degradation of beta-catenin by the destruction complex"/>
</dbReference>
<dbReference type="Reactome" id="R-RNO-196299">
    <property type="pathway name" value="Beta-catenin phosphorylation cascade"/>
</dbReference>
<dbReference type="Reactome" id="R-RNO-198753">
    <property type="pathway name" value="ERK/MAPK targets"/>
</dbReference>
<dbReference type="Reactome" id="R-RNO-202670">
    <property type="pathway name" value="ERKs are inactivated"/>
</dbReference>
<dbReference type="Reactome" id="R-RNO-2467813">
    <property type="pathway name" value="Separation of Sister Chromatids"/>
</dbReference>
<dbReference type="Reactome" id="R-RNO-2500257">
    <property type="pathway name" value="Resolution of Sister Chromatid Cohesion"/>
</dbReference>
<dbReference type="Reactome" id="R-RNO-2995383">
    <property type="pathway name" value="Initiation of Nuclear Envelope (NE) Reformation"/>
</dbReference>
<dbReference type="Reactome" id="R-RNO-389356">
    <property type="pathway name" value="Co-stimulation by CD28"/>
</dbReference>
<dbReference type="Reactome" id="R-RNO-389513">
    <property type="pathway name" value="Co-inhibition by CTLA4"/>
</dbReference>
<dbReference type="Reactome" id="R-RNO-432142">
    <property type="pathway name" value="Platelet sensitization by LDL"/>
</dbReference>
<dbReference type="Reactome" id="R-RNO-4641262">
    <property type="pathway name" value="Disassembly of the destruction complex and recruitment of AXIN to the membrane"/>
</dbReference>
<dbReference type="Reactome" id="R-RNO-5663220">
    <property type="pathway name" value="RHO GTPases Activate Formins"/>
</dbReference>
<dbReference type="Reactome" id="R-RNO-5673000">
    <property type="pathway name" value="RAF activation"/>
</dbReference>
<dbReference type="Reactome" id="R-RNO-5675221">
    <property type="pathway name" value="Negative regulation of MAPK pathway"/>
</dbReference>
<dbReference type="Reactome" id="R-RNO-6804757">
    <property type="pathway name" value="Regulation of TP53 Degradation"/>
</dbReference>
<dbReference type="Reactome" id="R-RNO-6811558">
    <property type="pathway name" value="PI5P, PP2A and IER3 Regulate PI3K/AKT Signaling"/>
</dbReference>
<dbReference type="Reactome" id="R-RNO-68877">
    <property type="pathway name" value="Mitotic Prometaphase"/>
</dbReference>
<dbReference type="Reactome" id="R-RNO-69231">
    <property type="pathway name" value="Cyclin D associated events in G1"/>
</dbReference>
<dbReference type="Reactome" id="R-RNO-69273">
    <property type="pathway name" value="Cyclin A/B1/B2 associated events during G2/M transition"/>
</dbReference>
<dbReference type="Reactome" id="R-RNO-9648025">
    <property type="pathway name" value="EML4 and NUDC in mitotic spindle formation"/>
</dbReference>
<dbReference type="Reactome" id="R-RNO-975957">
    <property type="pathway name" value="Nonsense Mediated Decay (NMD) enhanced by the Exon Junction Complex (EJC)"/>
</dbReference>
<dbReference type="Reactome" id="R-RNO-9833482">
    <property type="pathway name" value="PKR-mediated signaling"/>
</dbReference>
<dbReference type="Reactome" id="R-RNO-9860927">
    <property type="pathway name" value="Turbulent (oscillatory, disturbed) flow shear stress activates signaling by PIEZO1 and integrins in endothelial cells"/>
</dbReference>
<dbReference type="PRO" id="PR:P63331"/>
<dbReference type="Proteomes" id="UP000002494">
    <property type="component" value="Chromosome 10"/>
</dbReference>
<dbReference type="Bgee" id="ENSRNOG00000005389">
    <property type="expression patterns" value="Expressed in frontal cortex and 18 other cell types or tissues"/>
</dbReference>
<dbReference type="GO" id="GO:0000785">
    <property type="term" value="C:chromatin"/>
    <property type="evidence" value="ECO:0000250"/>
    <property type="project" value="UniProtKB"/>
</dbReference>
<dbReference type="GO" id="GO:0000775">
    <property type="term" value="C:chromosome, centromeric region"/>
    <property type="evidence" value="ECO:0000266"/>
    <property type="project" value="RGD"/>
</dbReference>
<dbReference type="GO" id="GO:0005737">
    <property type="term" value="C:cytoplasm"/>
    <property type="evidence" value="ECO:0000266"/>
    <property type="project" value="RGD"/>
</dbReference>
<dbReference type="GO" id="GO:0005829">
    <property type="term" value="C:cytosol"/>
    <property type="evidence" value="ECO:0000266"/>
    <property type="project" value="RGD"/>
</dbReference>
<dbReference type="GO" id="GO:0090443">
    <property type="term" value="C:FAR/SIN/STRIPAK complex"/>
    <property type="evidence" value="ECO:0000266"/>
    <property type="project" value="RGD"/>
</dbReference>
<dbReference type="GO" id="GO:0160232">
    <property type="term" value="C:INTAC complex"/>
    <property type="evidence" value="ECO:0000250"/>
    <property type="project" value="UniProtKB"/>
</dbReference>
<dbReference type="GO" id="GO:0045121">
    <property type="term" value="C:membrane raft"/>
    <property type="evidence" value="ECO:0000250"/>
    <property type="project" value="UniProtKB"/>
</dbReference>
<dbReference type="GO" id="GO:0005634">
    <property type="term" value="C:nucleus"/>
    <property type="evidence" value="ECO:0000250"/>
    <property type="project" value="UniProtKB"/>
</dbReference>
<dbReference type="GO" id="GO:0005886">
    <property type="term" value="C:plasma membrane"/>
    <property type="evidence" value="ECO:0000266"/>
    <property type="project" value="RGD"/>
</dbReference>
<dbReference type="GO" id="GO:0000159">
    <property type="term" value="C:protein phosphatase type 2A complex"/>
    <property type="evidence" value="ECO:0000315"/>
    <property type="project" value="MGI"/>
</dbReference>
<dbReference type="GO" id="GO:0008287">
    <property type="term" value="C:protein serine/threonine phosphatase complex"/>
    <property type="evidence" value="ECO:0000266"/>
    <property type="project" value="RGD"/>
</dbReference>
<dbReference type="GO" id="GO:0000922">
    <property type="term" value="C:spindle pole"/>
    <property type="evidence" value="ECO:0007669"/>
    <property type="project" value="UniProtKB-SubCell"/>
</dbReference>
<dbReference type="GO" id="GO:0045202">
    <property type="term" value="C:synapse"/>
    <property type="evidence" value="ECO:0000266"/>
    <property type="project" value="RGD"/>
</dbReference>
<dbReference type="GO" id="GO:0043195">
    <property type="term" value="C:terminal bouton"/>
    <property type="evidence" value="ECO:0000314"/>
    <property type="project" value="RGD"/>
</dbReference>
<dbReference type="GO" id="GO:0031698">
    <property type="term" value="F:beta-2 adrenergic receptor binding"/>
    <property type="evidence" value="ECO:0000353"/>
    <property type="project" value="ARUK-UCL"/>
</dbReference>
<dbReference type="GO" id="GO:0019899">
    <property type="term" value="F:enzyme binding"/>
    <property type="evidence" value="ECO:0000353"/>
    <property type="project" value="RGD"/>
</dbReference>
<dbReference type="GO" id="GO:0050811">
    <property type="term" value="F:GABA receptor binding"/>
    <property type="evidence" value="ECO:0000266"/>
    <property type="project" value="RGD"/>
</dbReference>
<dbReference type="GO" id="GO:0042802">
    <property type="term" value="F:identical protein binding"/>
    <property type="evidence" value="ECO:0000315"/>
    <property type="project" value="MGI"/>
</dbReference>
<dbReference type="GO" id="GO:0046872">
    <property type="term" value="F:metal ion binding"/>
    <property type="evidence" value="ECO:0007669"/>
    <property type="project" value="UniProtKB-KW"/>
</dbReference>
<dbReference type="GO" id="GO:0004721">
    <property type="term" value="F:phosphoprotein phosphatase activity"/>
    <property type="evidence" value="ECO:0000314"/>
    <property type="project" value="RGD"/>
</dbReference>
<dbReference type="GO" id="GO:1990405">
    <property type="term" value="F:protein antigen binding"/>
    <property type="evidence" value="ECO:0000353"/>
    <property type="project" value="RGD"/>
</dbReference>
<dbReference type="GO" id="GO:0019904">
    <property type="term" value="F:protein domain specific binding"/>
    <property type="evidence" value="ECO:0000314"/>
    <property type="project" value="RGD"/>
</dbReference>
<dbReference type="GO" id="GO:0046982">
    <property type="term" value="F:protein heterodimerization activity"/>
    <property type="evidence" value="ECO:0000250"/>
    <property type="project" value="UniProtKB"/>
</dbReference>
<dbReference type="GO" id="GO:0043422">
    <property type="term" value="F:protein kinase B binding"/>
    <property type="evidence" value="ECO:0000353"/>
    <property type="project" value="RGD"/>
</dbReference>
<dbReference type="GO" id="GO:0019901">
    <property type="term" value="F:protein kinase binding"/>
    <property type="evidence" value="ECO:0000314"/>
    <property type="project" value="RGD"/>
</dbReference>
<dbReference type="GO" id="GO:0051721">
    <property type="term" value="F:protein phosphatase 2A binding"/>
    <property type="evidence" value="ECO:0000314"/>
    <property type="project" value="RGD"/>
</dbReference>
<dbReference type="GO" id="GO:0019903">
    <property type="term" value="F:protein phosphatase binding"/>
    <property type="evidence" value="ECO:0000353"/>
    <property type="project" value="RGD"/>
</dbReference>
<dbReference type="GO" id="GO:0004722">
    <property type="term" value="F:protein serine/threonine phosphatase activity"/>
    <property type="evidence" value="ECO:0000314"/>
    <property type="project" value="RGD"/>
</dbReference>
<dbReference type="GO" id="GO:0004725">
    <property type="term" value="F:protein tyrosine phosphatase activity"/>
    <property type="evidence" value="ECO:0000266"/>
    <property type="project" value="RGD"/>
</dbReference>
<dbReference type="GO" id="GO:0044877">
    <property type="term" value="F:protein-containing complex binding"/>
    <property type="evidence" value="ECO:0000353"/>
    <property type="project" value="RGD"/>
</dbReference>
<dbReference type="GO" id="GO:0180006">
    <property type="term" value="F:RNA polymerase II CTD heptapeptide repeat S2 phosphatase activity"/>
    <property type="evidence" value="ECO:0000250"/>
    <property type="project" value="UniProtKB"/>
</dbReference>
<dbReference type="GO" id="GO:0180007">
    <property type="term" value="F:RNA polymerase II CTD heptapeptide repeat S5 phosphatase activity"/>
    <property type="evidence" value="ECO:0000250"/>
    <property type="project" value="UniProtKB"/>
</dbReference>
<dbReference type="GO" id="GO:0180008">
    <property type="term" value="F:RNA polymerase II CTD heptapeptide repeat S7 phosphatase activity"/>
    <property type="evidence" value="ECO:0000250"/>
    <property type="project" value="UniProtKB"/>
</dbReference>
<dbReference type="GO" id="GO:0048156">
    <property type="term" value="F:tau protein binding"/>
    <property type="evidence" value="ECO:0000353"/>
    <property type="project" value="RGD"/>
</dbReference>
<dbReference type="GO" id="GO:0044325">
    <property type="term" value="F:transmembrane transporter binding"/>
    <property type="evidence" value="ECO:0000353"/>
    <property type="project" value="RGD"/>
</dbReference>
<dbReference type="GO" id="GO:0003231">
    <property type="term" value="P:cardiac ventricle development"/>
    <property type="evidence" value="ECO:0000270"/>
    <property type="project" value="RGD"/>
</dbReference>
<dbReference type="GO" id="GO:0071277">
    <property type="term" value="P:cellular response to calcium ion"/>
    <property type="evidence" value="ECO:0000270"/>
    <property type="project" value="RGD"/>
</dbReference>
<dbReference type="GO" id="GO:0071345">
    <property type="term" value="P:cellular response to cytokine stimulus"/>
    <property type="evidence" value="ECO:0000270"/>
    <property type="project" value="RGD"/>
</dbReference>
<dbReference type="GO" id="GO:0071361">
    <property type="term" value="P:cellular response to ethanol"/>
    <property type="evidence" value="ECO:0000270"/>
    <property type="project" value="RGD"/>
</dbReference>
<dbReference type="GO" id="GO:0071372">
    <property type="term" value="P:cellular response to follicle-stimulating hormone stimulus"/>
    <property type="evidence" value="ECO:0000270"/>
    <property type="project" value="RGD"/>
</dbReference>
<dbReference type="GO" id="GO:0071333">
    <property type="term" value="P:cellular response to glucose stimulus"/>
    <property type="evidence" value="ECO:0000315"/>
    <property type="project" value="RGD"/>
</dbReference>
<dbReference type="GO" id="GO:0032869">
    <property type="term" value="P:cellular response to insulin stimulus"/>
    <property type="evidence" value="ECO:0000270"/>
    <property type="project" value="RGD"/>
</dbReference>
<dbReference type="GO" id="GO:0071383">
    <property type="term" value="P:cellular response to steroid hormone stimulus"/>
    <property type="evidence" value="ECO:0000270"/>
    <property type="project" value="RGD"/>
</dbReference>
<dbReference type="GO" id="GO:0007507">
    <property type="term" value="P:heart development"/>
    <property type="evidence" value="ECO:0000270"/>
    <property type="project" value="RGD"/>
</dbReference>
<dbReference type="GO" id="GO:0051321">
    <property type="term" value="P:meiotic cell cycle"/>
    <property type="evidence" value="ECO:0007669"/>
    <property type="project" value="UniProtKB-KW"/>
</dbReference>
<dbReference type="GO" id="GO:0007498">
    <property type="term" value="P:mesoderm development"/>
    <property type="evidence" value="ECO:0000266"/>
    <property type="project" value="RGD"/>
</dbReference>
<dbReference type="GO" id="GO:0000278">
    <property type="term" value="P:mitotic cell cycle"/>
    <property type="evidence" value="ECO:0000318"/>
    <property type="project" value="GO_Central"/>
</dbReference>
<dbReference type="GO" id="GO:0010719">
    <property type="term" value="P:negative regulation of epithelial to mesenchymal transition"/>
    <property type="evidence" value="ECO:0000266"/>
    <property type="project" value="RGD"/>
</dbReference>
<dbReference type="GO" id="GO:1904539">
    <property type="term" value="P:negative regulation of glycolytic process through fructose-6-phosphate"/>
    <property type="evidence" value="ECO:0000266"/>
    <property type="project" value="RGD"/>
</dbReference>
<dbReference type="GO" id="GO:0035331">
    <property type="term" value="P:negative regulation of hippo signaling"/>
    <property type="evidence" value="ECO:0000250"/>
    <property type="project" value="UniProtKB"/>
</dbReference>
<dbReference type="GO" id="GO:0051898">
    <property type="term" value="P:negative regulation of phosphatidylinositol 3-kinase/protein kinase B signal transduction"/>
    <property type="evidence" value="ECO:0000250"/>
    <property type="project" value="UniProtKB"/>
</dbReference>
<dbReference type="GO" id="GO:0042308">
    <property type="term" value="P:negative regulation of protein import into nucleus"/>
    <property type="evidence" value="ECO:0000315"/>
    <property type="project" value="RGD"/>
</dbReference>
<dbReference type="GO" id="GO:0035306">
    <property type="term" value="P:positive regulation of dephosphorylation"/>
    <property type="evidence" value="ECO:0000315"/>
    <property type="project" value="RGD"/>
</dbReference>
<dbReference type="GO" id="GO:2001238">
    <property type="term" value="P:positive regulation of extrinsic apoptotic signaling pathway"/>
    <property type="evidence" value="ECO:0000315"/>
    <property type="project" value="RGD"/>
</dbReference>
<dbReference type="GO" id="GO:1900227">
    <property type="term" value="P:positive regulation of NLRP3 inflammasome complex assembly"/>
    <property type="evidence" value="ECO:0000250"/>
    <property type="project" value="UniProtKB"/>
</dbReference>
<dbReference type="GO" id="GO:2000045">
    <property type="term" value="P:regulation of G1/S transition of mitotic cell cycle"/>
    <property type="evidence" value="ECO:0000266"/>
    <property type="project" value="RGD"/>
</dbReference>
<dbReference type="GO" id="GO:0031113">
    <property type="term" value="P:regulation of microtubule polymerization"/>
    <property type="evidence" value="ECO:0000315"/>
    <property type="project" value="ARUK-UCL"/>
</dbReference>
<dbReference type="GO" id="GO:0031952">
    <property type="term" value="P:regulation of protein autophosphorylation"/>
    <property type="evidence" value="ECO:0000315"/>
    <property type="project" value="MGI"/>
</dbReference>
<dbReference type="GO" id="GO:0042176">
    <property type="term" value="P:regulation of protein catabolic process"/>
    <property type="evidence" value="ECO:0000315"/>
    <property type="project" value="MGI"/>
</dbReference>
<dbReference type="GO" id="GO:0001932">
    <property type="term" value="P:regulation of protein phosphorylation"/>
    <property type="evidence" value="ECO:0000315"/>
    <property type="project" value="MGI"/>
</dbReference>
<dbReference type="GO" id="GO:0010469">
    <property type="term" value="P:regulation of signaling receptor activity"/>
    <property type="evidence" value="ECO:0000315"/>
    <property type="project" value="MGI"/>
</dbReference>
<dbReference type="GO" id="GO:0010288">
    <property type="term" value="P:response to lead ion"/>
    <property type="evidence" value="ECO:0000314"/>
    <property type="project" value="ARUK-UCL"/>
</dbReference>
<dbReference type="GO" id="GO:0160240">
    <property type="term" value="P:RNA polymerase II transcription initiation surveillance"/>
    <property type="evidence" value="ECO:0000250"/>
    <property type="project" value="UniProtKB"/>
</dbReference>
<dbReference type="GO" id="GO:0043029">
    <property type="term" value="P:T cell homeostasis"/>
    <property type="evidence" value="ECO:0000250"/>
    <property type="project" value="UniProtKB"/>
</dbReference>
<dbReference type="CDD" id="cd07415">
    <property type="entry name" value="MPP_PP2A_PP4_PP6"/>
    <property type="match status" value="1"/>
</dbReference>
<dbReference type="FunFam" id="3.60.21.10:FF:000003">
    <property type="entry name" value="Serine/threonine-protein phosphatase"/>
    <property type="match status" value="1"/>
</dbReference>
<dbReference type="Gene3D" id="3.60.21.10">
    <property type="match status" value="1"/>
</dbReference>
<dbReference type="InterPro" id="IPR004843">
    <property type="entry name" value="Calcineurin-like_PHP_ApaH"/>
</dbReference>
<dbReference type="InterPro" id="IPR029052">
    <property type="entry name" value="Metallo-depent_PP-like"/>
</dbReference>
<dbReference type="InterPro" id="IPR047129">
    <property type="entry name" value="PPA2-like"/>
</dbReference>
<dbReference type="InterPro" id="IPR006186">
    <property type="entry name" value="Ser/Thr-sp_prot-phosphatase"/>
</dbReference>
<dbReference type="PANTHER" id="PTHR45619">
    <property type="entry name" value="SERINE/THREONINE-PROTEIN PHOSPHATASE PP2A-RELATED"/>
    <property type="match status" value="1"/>
</dbReference>
<dbReference type="Pfam" id="PF00149">
    <property type="entry name" value="Metallophos"/>
    <property type="match status" value="1"/>
</dbReference>
<dbReference type="PRINTS" id="PR00114">
    <property type="entry name" value="STPHPHTASE"/>
</dbReference>
<dbReference type="SMART" id="SM00156">
    <property type="entry name" value="PP2Ac"/>
    <property type="match status" value="1"/>
</dbReference>
<dbReference type="SUPFAM" id="SSF56300">
    <property type="entry name" value="Metallo-dependent phosphatases"/>
    <property type="match status" value="1"/>
</dbReference>
<dbReference type="PROSITE" id="PS00125">
    <property type="entry name" value="SER_THR_PHOSPHATASE"/>
    <property type="match status" value="1"/>
</dbReference>
<gene>
    <name type="primary">Ppp2ca</name>
</gene>
<comment type="function">
    <text evidence="2 4">Catalytic subunit of protein phosphatase 2A (PP2A), a serine/threonine phosphatase involved in the regulation of a wide variety of enzymes, signal transduction pathways, and cellular events. PP2A is the major phosphatase for microtubule-associated proteins (MAPs). PP2A can modulate the activity of phosphorylase B kinase casein kinase 2, mitogen-stimulated S6 kinase, and MAP-2 kinase (By similarity). Cooperates with SGO2 to protect centromeric cohesin from separase-mediated cleavage in oocytes specifically during meiosis I (By similarity). Can dephosphorylate various proteins, such as AXIN1, p53/TP53, PIM3, WEE1. Activates RAF1 by dephosphorylating it at 'Ser-259'. Mediates dephosphorylation of WEE1, preventing its ubiquitin-mediated proteolysis, increasing WEE1 protein levels, and promoting the G2/M checkpoint. Mediates dephosphorylation of MYC; promoting its ubiquitin-mediated proteolysis: interaction with AMBRA1 enhances interaction between PPP2CA and MYC. Mediates dephosphorylation of FOXO3; promoting its stabilization: interaction with AMBRA1 enhances interaction between PPP2CA and FOXO3 (By similarity). Catalyzes dephosphorylation of the pyrin domain of NLRP3, promoting assembly of the NLRP3 inflammasome. Together with RACK1 adapter, mediates dephosphorylation of AKT1 at 'Ser-473', preventing AKT1 activation and AKT-mTOR signaling pathway. Dephosphorylation of AKT1 is essential for regulatory T-cells (Treg) homeostasis and stability (By similarity). Catalyzes dephosphorylation of PIM3, promotinh PIM3 ubiquitination and proteasomal degradation. Part of the striatin-interacting phosphatase and kinase (STRIPAK) complexes. STRIPAK complexes have critical roles in protein (de)phosphorylation and are regulators of multiple signaling pathways including Hippo, MAPK, nuclear receptor and cytoskeleton remodeling. Different types of STRIPAK complexes are involved in a variety of biological processes such as cell growth, differentiation, apoptosis, metabolism and immune regulation. Key mediator of a quality checkpoint during transcription elongation as part of the Integrator-PP2A (INTAC) complex. The INTAC complex drives premature transcription termination of transcripts that are unfavorably configured for transcriptional elongation: within the INTAC complex, PPP2CA catalyzes dephosphorylation of the C-terminal domain (CTD) of Pol II subunit POLR2A/RPB1 and SUPT5H/SPT5, thereby preventing transcriptional elongation (By similarity).</text>
</comment>
<comment type="catalytic activity">
    <reaction evidence="4">
        <text>O-phospho-L-seryl-[protein] + H2O = L-seryl-[protein] + phosphate</text>
        <dbReference type="Rhea" id="RHEA:20629"/>
        <dbReference type="Rhea" id="RHEA-COMP:9863"/>
        <dbReference type="Rhea" id="RHEA-COMP:11604"/>
        <dbReference type="ChEBI" id="CHEBI:15377"/>
        <dbReference type="ChEBI" id="CHEBI:29999"/>
        <dbReference type="ChEBI" id="CHEBI:43474"/>
        <dbReference type="ChEBI" id="CHEBI:83421"/>
        <dbReference type="EC" id="3.1.3.16"/>
    </reaction>
</comment>
<comment type="catalytic activity">
    <reaction evidence="4">
        <text>O-phospho-L-threonyl-[protein] + H2O = L-threonyl-[protein] + phosphate</text>
        <dbReference type="Rhea" id="RHEA:47004"/>
        <dbReference type="Rhea" id="RHEA-COMP:11060"/>
        <dbReference type="Rhea" id="RHEA-COMP:11605"/>
        <dbReference type="ChEBI" id="CHEBI:15377"/>
        <dbReference type="ChEBI" id="CHEBI:30013"/>
        <dbReference type="ChEBI" id="CHEBI:43474"/>
        <dbReference type="ChEBI" id="CHEBI:61977"/>
        <dbReference type="EC" id="3.1.3.16"/>
    </reaction>
</comment>
<comment type="cofactor">
    <cofactor evidence="4">
        <name>Mn(2+)</name>
        <dbReference type="ChEBI" id="CHEBI:29035"/>
    </cofactor>
    <cofactor evidence="4">
        <name>Fe(3+)</name>
        <dbReference type="ChEBI" id="CHEBI:29034"/>
    </cofactor>
    <cofactor evidence="4">
        <name>Zn(2+)</name>
        <dbReference type="ChEBI" id="CHEBI:29105"/>
    </cofactor>
    <text evidence="4">Binds 2 metal ions per subunit. Can be two manganese ions, or one iron ion and one zinc ion.</text>
</comment>
<comment type="activity regulation">
    <text evidence="4">Inhibited by the interaction between PPP2R2A and ARPP19; this inhibition is enhanced when ARPP19 is phosphorylated (By similarity). Inhibited by the interaction between PPP2R2A and PABIR1/FAM122A (By similarity).</text>
</comment>
<comment type="subunit">
    <text evidence="2 4">PP2A consists of a common heterodimeric core enzyme composed of PPP2CA, a 36 kDa catalytic subunit (subunit C), and PPP2R1A, a 65 kDa constant regulatory subunit (PR65 or subunit A), that associates with a variety of regulatory subunits. Proteins that associate with the core dimer include three families of regulatory subunits B (the R2/B/PR55/B55, R3/B''/PR72/PR130/PR59 and R5/B'/B56 families), the 48 kDa variable regulatory subunit, viral proteins, and cell signaling molecules. Interacts with the PP2A A subunit PPP2R1A. Interacts with the regulatory subunit PPP2R2A. Interacts (via C-terminus) with PTPA (By similarity). Interacts with NXN; the interaction is direct (By similarity). Interacts with KCTD20 (By similarity). Interacts with BTBD10 (By similarity). Interacts with SGO1 and SGO2. Interacts with RAF1. Interaction with IGBP1 protects unassembled PPP2CA from degradative ubiquitination. Interacts with GSK3B (via C2 domain). Interacts with MFHAS1; retains PPP2CA into the cytoplasm and excludes it from the nucleus. Interacts with PABIR1/FAM122A. Interacts with ADCY8; interaction is phosphatase activity-dependent; antagonizes interaction between ADCY8 and calmodulin. Interacts with CRTC3 (when phosphorylated at 'Ser-391'). Interacts with SPRY2; the interaction is inhibited by TESK1 interaction with SPRY2, possibly by vesicular sequestration of SPRY2. Interacts with TRAF3IP3. Interacts with AMBRA1 (via PxP motifs); enhancing interaction between PPP2CA and MYC or FOXO3. Forms a complex with AMBRA1 and BECN1; AMBRA1 and BECN1 components of the complex regulate MYC stability via different pathways. Part of the core of STRIPAK complexes composed of PP2A catalytic and scaffolding subunits, the striatins (PP2A regulatory subunits), the striatin-associated proteins MOB4, STRIP1 and STRIP2, PDCD10 and members of the STE20 kinases, such as STK24 and STK26. Phosphatase component of the Integrator-PP2A (INTAC) complex, composed of the Integrator core complex and protein phosphatase 2A subunits PPP2CA and PPP2R1A (By similarity).</text>
</comment>
<comment type="interaction">
    <interactant intactId="EBI-7050205">
        <id>P63331</id>
    </interactant>
    <interactant intactId="EBI-917570">
        <id>P47942</id>
        <label>Dpysl2</label>
    </interactant>
    <organismsDiffer>false</organismsDiffer>
    <experiments>2</experiments>
</comment>
<comment type="interaction">
    <interactant intactId="EBI-7050205">
        <id>P63331</id>
    </interactant>
    <interactant intactId="EBI-359234">
        <id>P39687</id>
        <label>ANP32A</label>
    </interactant>
    <organismsDiffer>true</organismsDiffer>
    <experiments>2</experiments>
</comment>
<comment type="interaction">
    <interactant intactId="EBI-7050205">
        <id>P63331</id>
    </interactant>
    <interactant intactId="EBI-1054735">
        <id>O75663</id>
        <label>TIPRL</label>
    </interactant>
    <organismsDiffer>true</organismsDiffer>
    <experiments>3</experiments>
</comment>
<comment type="subcellular location">
    <subcellularLocation>
        <location evidence="4">Cytoplasm</location>
    </subcellularLocation>
    <subcellularLocation>
        <location evidence="4">Nucleus</location>
    </subcellularLocation>
    <subcellularLocation>
        <location evidence="4">Chromosome</location>
    </subcellularLocation>
    <subcellularLocation>
        <location evidence="4">Chromosome</location>
        <location evidence="4">Centromere</location>
    </subcellularLocation>
    <subcellularLocation>
        <location evidence="4">Cytoplasm</location>
        <location evidence="4">Cytoskeleton</location>
        <location evidence="4">Spindle pole</location>
    </subcellularLocation>
    <text evidence="2 4">In prometaphase cells, but not in anaphase cells, localizes at centromeres. During mitosis, also found at spindle poles (By similarity). Centromeric localization requires the presence of SGO2 (By similarity). Recruited to chromatin and transcription pause-release checkpoint via its association with the Integrator complex (By similarity).</text>
</comment>
<comment type="PTM">
    <text evidence="3">Reversibly methyl esterified on Leu-309 by leucine carboxyl methyltransferase 1 (Lcmt1) and protein phosphatase methylesterase 1 (Ppme1). Carboxyl methylation influences the affinity of the catalytic subunit for the different regulatory subunits, thereby modulating the PP2A holoenzyme's substrate specificity, enzyme activity and cellular localization (By similarity).</text>
</comment>
<comment type="PTM">
    <text evidence="3">Phosphorylation of either threonine (by autophosphorylation-activated protein kinase) or tyrosine results in inactivation of the phosphatase. Auto-dephosphorylation has been suggested as a mechanism for reactivation (By similarity).</text>
</comment>
<comment type="PTM">
    <text evidence="4">Polyubiquitinated, leading to its degradation by the proteasome.</text>
</comment>
<comment type="similarity">
    <text evidence="5">Belongs to the PPP phosphatase family. PP-1 subfamily.</text>
</comment>
<protein>
    <recommendedName>
        <fullName>Serine/threonine-protein phosphatase 2A catalytic subunit alpha isoform</fullName>
        <shortName>PP2A-alpha</shortName>
        <ecNumber evidence="4">3.1.3.16</ecNumber>
    </recommendedName>
</protein>
<reference key="1">
    <citation type="journal article" date="1989" name="Nucleic Acids Res.">
        <title>Nucleotide sequence of a rat heart cDNA encoding the isotype alpha of the catalytic subunit of protein phosphatase 2A.</title>
        <authorList>
            <person name="Posas F."/>
            <person name="Arino J."/>
        </authorList>
    </citation>
    <scope>NUCLEOTIDE SEQUENCE [MRNA]</scope>
    <source>
        <tissue>Heart</tissue>
    </source>
</reference>
<reference key="2">
    <citation type="journal article" date="1988" name="Biochim. Biophys. Acta">
        <title>Molecular cloning of cDNA for the catalytic subunit of rat liver type 2A protein phosphatase, and detection of high levels of expression of the gene in normal and cancer cells.</title>
        <authorList>
            <person name="Kitagawa Y."/>
            <person name="Tahira T."/>
            <person name="Ikeda I."/>
            <person name="Kikuchi K."/>
            <person name="Tsuiki S."/>
            <person name="Sugimura T."/>
            <person name="Nagao M."/>
        </authorList>
    </citation>
    <scope>NUCLEOTIDE SEQUENCE [MRNA]</scope>
    <source>
        <tissue>Liver</tissue>
    </source>
</reference>
<reference key="3">
    <citation type="journal article" date="2004" name="Genome Res.">
        <title>The status, quality, and expansion of the NIH full-length cDNA project: the Mammalian Gene Collection (MGC).</title>
        <authorList>
            <consortium name="The MGC Project Team"/>
        </authorList>
    </citation>
    <scope>NUCLEOTIDE SEQUENCE [LARGE SCALE MRNA]</scope>
    <source>
        <tissue>Heart</tissue>
        <tissue>Lung</tissue>
    </source>
</reference>
<organism>
    <name type="scientific">Rattus norvegicus</name>
    <name type="common">Rat</name>
    <dbReference type="NCBI Taxonomy" id="10116"/>
    <lineage>
        <taxon>Eukaryota</taxon>
        <taxon>Metazoa</taxon>
        <taxon>Chordata</taxon>
        <taxon>Craniata</taxon>
        <taxon>Vertebrata</taxon>
        <taxon>Euteleostomi</taxon>
        <taxon>Mammalia</taxon>
        <taxon>Eutheria</taxon>
        <taxon>Euarchontoglires</taxon>
        <taxon>Glires</taxon>
        <taxon>Rodentia</taxon>
        <taxon>Myomorpha</taxon>
        <taxon>Muroidea</taxon>
        <taxon>Muridae</taxon>
        <taxon>Murinae</taxon>
        <taxon>Rattus</taxon>
    </lineage>
</organism>
<sequence>MDEKLFTKELDQWIEQLNECKQLSESQVKSLCEKAKEILTKESNVQEVRCPVTVCGDVHGQFHDLMELFRIGGKSPDTNYLFMGDYVDRGYYSVETVTLLVALKVRYRERITILRGNHESRQITQVYGFYDECLRKYGNANVWKYFTDLFDYLPLTALVDGQIFCLHGGLSPSIDTLDHIRALDRLQEVPHEGPMCDLLWSDPDDRGGWGISPRGAGYTFGQDISETFNHANGLTLVSRAHQLVMEGYNWCHDRNVVTIFSAPNYCYRCGNQAAIMELDDTLKYSFLQFDPAPRRGEPHVTRRTPDYFL</sequence>